<gene>
    <name type="primary">dbp9</name>
    <name type="ORF">SS1G_06425</name>
</gene>
<feature type="chain" id="PRO_0000310256" description="ATP-dependent RNA helicase dbp9">
    <location>
        <begin position="1"/>
        <end position="607"/>
    </location>
</feature>
<feature type="domain" description="Helicase ATP-binding" evidence="2">
    <location>
        <begin position="55"/>
        <end position="232"/>
    </location>
</feature>
<feature type="domain" description="Helicase C-terminal" evidence="3">
    <location>
        <begin position="243"/>
        <end position="475"/>
    </location>
</feature>
<feature type="region of interest" description="Disordered" evidence="4">
    <location>
        <begin position="332"/>
        <end position="380"/>
    </location>
</feature>
<feature type="region of interest" description="Disordered" evidence="4">
    <location>
        <begin position="580"/>
        <end position="607"/>
    </location>
</feature>
<feature type="short sequence motif" description="Q motif">
    <location>
        <begin position="24"/>
        <end position="52"/>
    </location>
</feature>
<feature type="short sequence motif" description="DEAD box">
    <location>
        <begin position="180"/>
        <end position="183"/>
    </location>
</feature>
<feature type="compositionally biased region" description="Acidic residues" evidence="4">
    <location>
        <begin position="334"/>
        <end position="352"/>
    </location>
</feature>
<feature type="compositionally biased region" description="Basic and acidic residues" evidence="4">
    <location>
        <begin position="353"/>
        <end position="368"/>
    </location>
</feature>
<feature type="compositionally biased region" description="Basic residues" evidence="4">
    <location>
        <begin position="580"/>
        <end position="592"/>
    </location>
</feature>
<feature type="binding site" evidence="2">
    <location>
        <begin position="68"/>
        <end position="75"/>
    </location>
    <ligand>
        <name>ATP</name>
        <dbReference type="ChEBI" id="CHEBI:30616"/>
    </ligand>
</feature>
<protein>
    <recommendedName>
        <fullName>ATP-dependent RNA helicase dbp9</fullName>
        <ecNumber>3.6.4.13</ecNumber>
    </recommendedName>
</protein>
<keyword id="KW-0067">ATP-binding</keyword>
<keyword id="KW-0347">Helicase</keyword>
<keyword id="KW-0378">Hydrolase</keyword>
<keyword id="KW-0547">Nucleotide-binding</keyword>
<keyword id="KW-0539">Nucleus</keyword>
<keyword id="KW-1185">Reference proteome</keyword>
<keyword id="KW-0690">Ribosome biogenesis</keyword>
<keyword id="KW-0694">RNA-binding</keyword>
<keyword id="KW-0698">rRNA processing</keyword>
<dbReference type="EC" id="3.6.4.13"/>
<dbReference type="EMBL" id="CH476628">
    <property type="protein sequence ID" value="EDO03944.1"/>
    <property type="molecule type" value="Genomic_DNA"/>
</dbReference>
<dbReference type="RefSeq" id="XP_001592186.1">
    <property type="nucleotide sequence ID" value="XM_001592136.1"/>
</dbReference>
<dbReference type="SMR" id="A7EM78"/>
<dbReference type="FunCoup" id="A7EM78">
    <property type="interactions" value="914"/>
</dbReference>
<dbReference type="STRING" id="665079.A7EM78"/>
<dbReference type="GeneID" id="5488646"/>
<dbReference type="KEGG" id="ssl:SS1G_06425"/>
<dbReference type="VEuPathDB" id="FungiDB:sscle_13g092700"/>
<dbReference type="InParanoid" id="A7EM78"/>
<dbReference type="OMA" id="NASEQCV"/>
<dbReference type="OrthoDB" id="1191041at2759"/>
<dbReference type="Proteomes" id="UP000001312">
    <property type="component" value="Unassembled WGS sequence"/>
</dbReference>
<dbReference type="GO" id="GO:0005730">
    <property type="term" value="C:nucleolus"/>
    <property type="evidence" value="ECO:0000318"/>
    <property type="project" value="GO_Central"/>
</dbReference>
<dbReference type="GO" id="GO:0005524">
    <property type="term" value="F:ATP binding"/>
    <property type="evidence" value="ECO:0007669"/>
    <property type="project" value="UniProtKB-KW"/>
</dbReference>
<dbReference type="GO" id="GO:0016887">
    <property type="term" value="F:ATP hydrolysis activity"/>
    <property type="evidence" value="ECO:0007669"/>
    <property type="project" value="RHEA"/>
</dbReference>
<dbReference type="GO" id="GO:0003723">
    <property type="term" value="F:RNA binding"/>
    <property type="evidence" value="ECO:0007669"/>
    <property type="project" value="UniProtKB-KW"/>
</dbReference>
<dbReference type="GO" id="GO:0003724">
    <property type="term" value="F:RNA helicase activity"/>
    <property type="evidence" value="ECO:0007669"/>
    <property type="project" value="UniProtKB-EC"/>
</dbReference>
<dbReference type="GO" id="GO:0006364">
    <property type="term" value="P:rRNA processing"/>
    <property type="evidence" value="ECO:0007669"/>
    <property type="project" value="UniProtKB-KW"/>
</dbReference>
<dbReference type="CDD" id="cd17961">
    <property type="entry name" value="DEADc_DDX56"/>
    <property type="match status" value="1"/>
</dbReference>
<dbReference type="CDD" id="cd18787">
    <property type="entry name" value="SF2_C_DEAD"/>
    <property type="match status" value="1"/>
</dbReference>
<dbReference type="Gene3D" id="3.40.50.300">
    <property type="entry name" value="P-loop containing nucleotide triphosphate hydrolases"/>
    <property type="match status" value="2"/>
</dbReference>
<dbReference type="InterPro" id="IPR011545">
    <property type="entry name" value="DEAD/DEAH_box_helicase_dom"/>
</dbReference>
<dbReference type="InterPro" id="IPR050079">
    <property type="entry name" value="DEAD_box_RNA_helicase"/>
</dbReference>
<dbReference type="InterPro" id="IPR014001">
    <property type="entry name" value="Helicase_ATP-bd"/>
</dbReference>
<dbReference type="InterPro" id="IPR001650">
    <property type="entry name" value="Helicase_C-like"/>
</dbReference>
<dbReference type="InterPro" id="IPR027417">
    <property type="entry name" value="P-loop_NTPase"/>
</dbReference>
<dbReference type="InterPro" id="IPR014014">
    <property type="entry name" value="RNA_helicase_DEAD_Q_motif"/>
</dbReference>
<dbReference type="PANTHER" id="PTHR47959">
    <property type="entry name" value="ATP-DEPENDENT RNA HELICASE RHLE-RELATED"/>
    <property type="match status" value="1"/>
</dbReference>
<dbReference type="PANTHER" id="PTHR47959:SF21">
    <property type="entry name" value="DEAD-BOX HELICASE 56"/>
    <property type="match status" value="1"/>
</dbReference>
<dbReference type="Pfam" id="PF00270">
    <property type="entry name" value="DEAD"/>
    <property type="match status" value="1"/>
</dbReference>
<dbReference type="Pfam" id="PF00271">
    <property type="entry name" value="Helicase_C"/>
    <property type="match status" value="2"/>
</dbReference>
<dbReference type="SMART" id="SM00487">
    <property type="entry name" value="DEXDc"/>
    <property type="match status" value="1"/>
</dbReference>
<dbReference type="SMART" id="SM00490">
    <property type="entry name" value="HELICc"/>
    <property type="match status" value="1"/>
</dbReference>
<dbReference type="SUPFAM" id="SSF52540">
    <property type="entry name" value="P-loop containing nucleoside triphosphate hydrolases"/>
    <property type="match status" value="2"/>
</dbReference>
<dbReference type="PROSITE" id="PS51192">
    <property type="entry name" value="HELICASE_ATP_BIND_1"/>
    <property type="match status" value="1"/>
</dbReference>
<dbReference type="PROSITE" id="PS51194">
    <property type="entry name" value="HELICASE_CTER"/>
    <property type="match status" value="1"/>
</dbReference>
<dbReference type="PROSITE" id="PS51195">
    <property type="entry name" value="Q_MOTIF"/>
    <property type="match status" value="1"/>
</dbReference>
<sequence length="607" mass="67588">MKRKLDVNDVPVPTEEAEAANGKATFASLGLDARLLQGIAKQNFQSPTLVQSKAIPLTLEGRDILARAKTGSGKTAAYLLPILHSILKRKELSPTQCTSALILVPTRELADQVYKTVESFTAFCAKDVRAVNLTQRVSDAVQRSLLADSPDIVIATPARASLNANTSALLLTNLTHMVIDEADLVLSYGYDEDLQNVAKIMPKGVQTVLMSATLTSEVETLKGLFCRNPEVLKLEEAEDEGKGVSQFVVKCAEDEKFLLVYVIFKLKLIKGKCIIFVGDIDRCYRLKLFLEQFGTRSCILNSQLPVNSRIHVVEEFNKNVYDIIIASDEHEVLGDEDEPKPEETEEVEADDASGEKEDAKDAKKETKQPSKKKQKTGKKDKEYGVSRGIDFKNVACVLNFDLPTSSKSYTHRIGRTARAGQTGMALSFVIPSALYRKHKPTSIESAKDDEKVLAKIIKHQAKKGKEVKPYNFDMKQVDAFRYRMGDALRAVTSIAVQEAKAREIRQELMKSEKLKRHFEENPSDLYHLRHDGELRPARVQAHLKHVPDYLLPKEGKKGITGGDIGFVGMHKTTENRIRKARAANKAKGRGKGRKSDPLKTFKAKSRK</sequence>
<proteinExistence type="inferred from homology"/>
<name>DBP9_SCLS1</name>
<evidence type="ECO:0000250" key="1"/>
<evidence type="ECO:0000255" key="2">
    <source>
        <dbReference type="PROSITE-ProRule" id="PRU00541"/>
    </source>
</evidence>
<evidence type="ECO:0000255" key="3">
    <source>
        <dbReference type="PROSITE-ProRule" id="PRU00542"/>
    </source>
</evidence>
<evidence type="ECO:0000256" key="4">
    <source>
        <dbReference type="SAM" id="MobiDB-lite"/>
    </source>
</evidence>
<evidence type="ECO:0000305" key="5"/>
<organism>
    <name type="scientific">Sclerotinia sclerotiorum (strain ATCC 18683 / 1980 / Ss-1)</name>
    <name type="common">White mold</name>
    <name type="synonym">Whetzelinia sclerotiorum</name>
    <dbReference type="NCBI Taxonomy" id="665079"/>
    <lineage>
        <taxon>Eukaryota</taxon>
        <taxon>Fungi</taxon>
        <taxon>Dikarya</taxon>
        <taxon>Ascomycota</taxon>
        <taxon>Pezizomycotina</taxon>
        <taxon>Leotiomycetes</taxon>
        <taxon>Helotiales</taxon>
        <taxon>Sclerotiniaceae</taxon>
        <taxon>Sclerotinia</taxon>
    </lineage>
</organism>
<reference key="1">
    <citation type="journal article" date="2011" name="PLoS Genet.">
        <title>Genomic analysis of the necrotrophic fungal pathogens Sclerotinia sclerotiorum and Botrytis cinerea.</title>
        <authorList>
            <person name="Amselem J."/>
            <person name="Cuomo C.A."/>
            <person name="van Kan J.A.L."/>
            <person name="Viaud M."/>
            <person name="Benito E.P."/>
            <person name="Couloux A."/>
            <person name="Coutinho P.M."/>
            <person name="de Vries R.P."/>
            <person name="Dyer P.S."/>
            <person name="Fillinger S."/>
            <person name="Fournier E."/>
            <person name="Gout L."/>
            <person name="Hahn M."/>
            <person name="Kohn L."/>
            <person name="Lapalu N."/>
            <person name="Plummer K.M."/>
            <person name="Pradier J.-M."/>
            <person name="Quevillon E."/>
            <person name="Sharon A."/>
            <person name="Simon A."/>
            <person name="ten Have A."/>
            <person name="Tudzynski B."/>
            <person name="Tudzynski P."/>
            <person name="Wincker P."/>
            <person name="Andrew M."/>
            <person name="Anthouard V."/>
            <person name="Beever R.E."/>
            <person name="Beffa R."/>
            <person name="Benoit I."/>
            <person name="Bouzid O."/>
            <person name="Brault B."/>
            <person name="Chen Z."/>
            <person name="Choquer M."/>
            <person name="Collemare J."/>
            <person name="Cotton P."/>
            <person name="Danchin E.G."/>
            <person name="Da Silva C."/>
            <person name="Gautier A."/>
            <person name="Giraud C."/>
            <person name="Giraud T."/>
            <person name="Gonzalez C."/>
            <person name="Grossetete S."/>
            <person name="Gueldener U."/>
            <person name="Henrissat B."/>
            <person name="Howlett B.J."/>
            <person name="Kodira C."/>
            <person name="Kretschmer M."/>
            <person name="Lappartient A."/>
            <person name="Leroch M."/>
            <person name="Levis C."/>
            <person name="Mauceli E."/>
            <person name="Neuveglise C."/>
            <person name="Oeser B."/>
            <person name="Pearson M."/>
            <person name="Poulain J."/>
            <person name="Poussereau N."/>
            <person name="Quesneville H."/>
            <person name="Rascle C."/>
            <person name="Schumacher J."/>
            <person name="Segurens B."/>
            <person name="Sexton A."/>
            <person name="Silva E."/>
            <person name="Sirven C."/>
            <person name="Soanes D.M."/>
            <person name="Talbot N.J."/>
            <person name="Templeton M."/>
            <person name="Yandava C."/>
            <person name="Yarden O."/>
            <person name="Zeng Q."/>
            <person name="Rollins J.A."/>
            <person name="Lebrun M.-H."/>
            <person name="Dickman M."/>
        </authorList>
    </citation>
    <scope>NUCLEOTIDE SEQUENCE [LARGE SCALE GENOMIC DNA]</scope>
    <source>
        <strain>ATCC 18683 / 1980 / Ss-1</strain>
    </source>
</reference>
<comment type="function">
    <text evidence="1">ATP-binding RNA helicase involved in the biogenesis of 60S ribosomal subunits and is required for the normal formation of 25S and 5.8S rRNAs.</text>
</comment>
<comment type="catalytic activity">
    <reaction>
        <text>ATP + H2O = ADP + phosphate + H(+)</text>
        <dbReference type="Rhea" id="RHEA:13065"/>
        <dbReference type="ChEBI" id="CHEBI:15377"/>
        <dbReference type="ChEBI" id="CHEBI:15378"/>
        <dbReference type="ChEBI" id="CHEBI:30616"/>
        <dbReference type="ChEBI" id="CHEBI:43474"/>
        <dbReference type="ChEBI" id="CHEBI:456216"/>
        <dbReference type="EC" id="3.6.4.13"/>
    </reaction>
</comment>
<comment type="subcellular location">
    <subcellularLocation>
        <location evidence="1">Nucleus</location>
        <location evidence="1">Nucleolus</location>
    </subcellularLocation>
</comment>
<comment type="domain">
    <text>The Q motif is unique to and characteristic of the DEAD box family of RNA helicases and controls ATP binding and hydrolysis.</text>
</comment>
<comment type="similarity">
    <text evidence="5">Belongs to the DEAD box helicase family. DDX56/DBP9 subfamily.</text>
</comment>
<accession>A7EM78</accession>